<evidence type="ECO:0000250" key="1"/>
<evidence type="ECO:0000255" key="2"/>
<evidence type="ECO:0000305" key="3"/>
<protein>
    <recommendedName>
        <fullName>Long chronological lifespan protein 2</fullName>
    </recommendedName>
</protein>
<keyword id="KW-0732">Signal</keyword>
<dbReference type="EMBL" id="DS499597">
    <property type="protein sequence ID" value="EDP51251.1"/>
    <property type="molecule type" value="Genomic_DNA"/>
</dbReference>
<dbReference type="SMR" id="B0Y310"/>
<dbReference type="EnsemblFungi" id="EDP51251">
    <property type="protein sequence ID" value="EDP51251"/>
    <property type="gene ID" value="AFUB_052550"/>
</dbReference>
<dbReference type="VEuPathDB" id="FungiDB:AFUB_052550"/>
<dbReference type="HOGENOM" id="CLU_142363_0_0_1"/>
<dbReference type="OrthoDB" id="126304at5052"/>
<dbReference type="PhylomeDB" id="B0Y310"/>
<dbReference type="Proteomes" id="UP000001699">
    <property type="component" value="Unassembled WGS sequence"/>
</dbReference>
<dbReference type="GO" id="GO:0036503">
    <property type="term" value="P:ERAD pathway"/>
    <property type="evidence" value="ECO:0007669"/>
    <property type="project" value="TreeGrafter"/>
</dbReference>
<dbReference type="CDD" id="cd23996">
    <property type="entry name" value="LCL2-like"/>
    <property type="match status" value="1"/>
</dbReference>
<dbReference type="InterPro" id="IPR034543">
    <property type="entry name" value="LCL2"/>
</dbReference>
<dbReference type="PANTHER" id="PTHR38425">
    <property type="entry name" value="LONG CHRONOLOGICAL LIFESPAN PROTEIN 2"/>
    <property type="match status" value="1"/>
</dbReference>
<dbReference type="PANTHER" id="PTHR38425:SF1">
    <property type="entry name" value="LONG CHRONOLOGICAL LIFESPAN PROTEIN 2"/>
    <property type="match status" value="1"/>
</dbReference>
<sequence length="122" mass="13405">MLSSWVRCLGALLFLASVAQAQFQFFEHMFGGGHQEHHQQNTQNSASDSARYQQLWEGTNCNKYLCPGTLACVDFPHHCPCAHPNVEDKVELGEGSAVCISKGGYKPGEAARKIELARKGLL</sequence>
<organism>
    <name type="scientific">Aspergillus fumigatus (strain CBS 144.89 / FGSC A1163 / CEA10)</name>
    <name type="common">Neosartorya fumigata</name>
    <dbReference type="NCBI Taxonomy" id="451804"/>
    <lineage>
        <taxon>Eukaryota</taxon>
        <taxon>Fungi</taxon>
        <taxon>Dikarya</taxon>
        <taxon>Ascomycota</taxon>
        <taxon>Pezizomycotina</taxon>
        <taxon>Eurotiomycetes</taxon>
        <taxon>Eurotiomycetidae</taxon>
        <taxon>Eurotiales</taxon>
        <taxon>Aspergillaceae</taxon>
        <taxon>Aspergillus</taxon>
        <taxon>Aspergillus subgen. Fumigati</taxon>
    </lineage>
</organism>
<comment type="function">
    <text evidence="1">Probable component of the endoplasmic reticulum-associated degradation (ERAD) pathway.</text>
</comment>
<comment type="similarity">
    <text evidence="3">Belongs to the LCL2 family.</text>
</comment>
<feature type="signal peptide" evidence="2">
    <location>
        <begin position="1"/>
        <end position="21"/>
    </location>
</feature>
<feature type="chain" id="PRO_0000408592" description="Long chronological lifespan protein 2">
    <location>
        <begin position="22"/>
        <end position="122"/>
    </location>
</feature>
<gene>
    <name type="primary">lcl2</name>
    <name type="ORF">AFUB_052550</name>
</gene>
<reference key="1">
    <citation type="journal article" date="2008" name="PLoS Genet.">
        <title>Genomic islands in the pathogenic filamentous fungus Aspergillus fumigatus.</title>
        <authorList>
            <person name="Fedorova N.D."/>
            <person name="Khaldi N."/>
            <person name="Joardar V.S."/>
            <person name="Maiti R."/>
            <person name="Amedeo P."/>
            <person name="Anderson M.J."/>
            <person name="Crabtree J."/>
            <person name="Silva J.C."/>
            <person name="Badger J.H."/>
            <person name="Albarraq A."/>
            <person name="Angiuoli S."/>
            <person name="Bussey H."/>
            <person name="Bowyer P."/>
            <person name="Cotty P.J."/>
            <person name="Dyer P.S."/>
            <person name="Egan A."/>
            <person name="Galens K."/>
            <person name="Fraser-Liggett C.M."/>
            <person name="Haas B.J."/>
            <person name="Inman J.M."/>
            <person name="Kent R."/>
            <person name="Lemieux S."/>
            <person name="Malavazi I."/>
            <person name="Orvis J."/>
            <person name="Roemer T."/>
            <person name="Ronning C.M."/>
            <person name="Sundaram J.P."/>
            <person name="Sutton G."/>
            <person name="Turner G."/>
            <person name="Venter J.C."/>
            <person name="White O.R."/>
            <person name="Whitty B.R."/>
            <person name="Youngman P."/>
            <person name="Wolfe K.H."/>
            <person name="Goldman G.H."/>
            <person name="Wortman J.R."/>
            <person name="Jiang B."/>
            <person name="Denning D.W."/>
            <person name="Nierman W.C."/>
        </authorList>
    </citation>
    <scope>NUCLEOTIDE SEQUENCE [LARGE SCALE GENOMIC DNA]</scope>
    <source>
        <strain>CBS 144.89 / FGSC A1163 / CEA10</strain>
    </source>
</reference>
<proteinExistence type="inferred from homology"/>
<name>LCL2_ASPFC</name>
<accession>B0Y310</accession>